<proteinExistence type="inferred from homology"/>
<evidence type="ECO:0000255" key="1">
    <source>
        <dbReference type="HAMAP-Rule" id="MF_01577"/>
    </source>
</evidence>
<feature type="chain" id="PRO_1000200775" description="Putative multidrug resistance protein MdtD">
    <location>
        <begin position="1"/>
        <end position="471"/>
    </location>
</feature>
<feature type="topological domain" description="Periplasmic" evidence="1">
    <location>
        <begin position="1"/>
        <end position="11"/>
    </location>
</feature>
<feature type="transmembrane region" description="Helical" evidence="1">
    <location>
        <begin position="12"/>
        <end position="32"/>
    </location>
</feature>
<feature type="topological domain" description="Cytoplasmic" evidence="1">
    <location>
        <begin position="33"/>
        <end position="48"/>
    </location>
</feature>
<feature type="transmembrane region" description="Helical" evidence="1">
    <location>
        <begin position="49"/>
        <end position="69"/>
    </location>
</feature>
<feature type="topological domain" description="Periplasmic" evidence="1">
    <location>
        <begin position="70"/>
        <end position="76"/>
    </location>
</feature>
<feature type="transmembrane region" description="Helical" evidence="1">
    <location>
        <begin position="77"/>
        <end position="97"/>
    </location>
</feature>
<feature type="topological domain" description="Cytoplasmic" evidence="1">
    <location>
        <begin position="98"/>
        <end position="101"/>
    </location>
</feature>
<feature type="transmembrane region" description="Helical" evidence="1">
    <location>
        <begin position="102"/>
        <end position="124"/>
    </location>
</feature>
<feature type="topological domain" description="Periplasmic" evidence="1">
    <location>
        <begin position="125"/>
        <end position="137"/>
    </location>
</feature>
<feature type="transmembrane region" description="Helical" evidence="1">
    <location>
        <begin position="138"/>
        <end position="158"/>
    </location>
</feature>
<feature type="topological domain" description="Cytoplasmic" evidence="1">
    <location>
        <begin position="159"/>
        <end position="164"/>
    </location>
</feature>
<feature type="transmembrane region" description="Helical" evidence="1">
    <location>
        <begin position="165"/>
        <end position="185"/>
    </location>
</feature>
<feature type="topological domain" description="Periplasmic" evidence="1">
    <location>
        <begin position="186"/>
        <end position="196"/>
    </location>
</feature>
<feature type="transmembrane region" description="Helical" evidence="1">
    <location>
        <begin position="197"/>
        <end position="217"/>
    </location>
</feature>
<feature type="topological domain" description="Cytoplasmic" evidence="1">
    <location>
        <begin position="218"/>
        <end position="224"/>
    </location>
</feature>
<feature type="transmembrane region" description="Helical" evidence="1">
    <location>
        <begin position="225"/>
        <end position="245"/>
    </location>
</feature>
<feature type="topological domain" description="Periplasmic" evidence="1">
    <location>
        <begin position="246"/>
        <end position="262"/>
    </location>
</feature>
<feature type="transmembrane region" description="Helical" evidence="1">
    <location>
        <begin position="263"/>
        <end position="283"/>
    </location>
</feature>
<feature type="topological domain" description="Cytoplasmic" evidence="1">
    <location>
        <begin position="284"/>
        <end position="285"/>
    </location>
</feature>
<feature type="transmembrane region" description="Helical" evidence="1">
    <location>
        <begin position="286"/>
        <end position="306"/>
    </location>
</feature>
<feature type="topological domain" description="Periplasmic" evidence="1">
    <location>
        <begin position="307"/>
        <end position="341"/>
    </location>
</feature>
<feature type="transmembrane region" description="Helical" evidence="1">
    <location>
        <begin position="342"/>
        <end position="362"/>
    </location>
</feature>
<feature type="topological domain" description="Cytoplasmic" evidence="1">
    <location>
        <begin position="363"/>
        <end position="395"/>
    </location>
</feature>
<feature type="transmembrane region" description="Helical" evidence="1">
    <location>
        <begin position="396"/>
        <end position="416"/>
    </location>
</feature>
<feature type="topological domain" description="Periplasmic" evidence="1">
    <location>
        <begin position="417"/>
        <end position="430"/>
    </location>
</feature>
<feature type="transmembrane region" description="Helical" evidence="1">
    <location>
        <begin position="431"/>
        <end position="451"/>
    </location>
</feature>
<feature type="topological domain" description="Cytoplasmic" evidence="1">
    <location>
        <begin position="452"/>
        <end position="471"/>
    </location>
</feature>
<protein>
    <recommendedName>
        <fullName evidence="1">Putative multidrug resistance protein MdtD</fullName>
    </recommendedName>
</protein>
<organism>
    <name type="scientific">Escherichia coli O45:K1 (strain S88 / ExPEC)</name>
    <dbReference type="NCBI Taxonomy" id="585035"/>
    <lineage>
        <taxon>Bacteria</taxon>
        <taxon>Pseudomonadati</taxon>
        <taxon>Pseudomonadota</taxon>
        <taxon>Gammaproteobacteria</taxon>
        <taxon>Enterobacterales</taxon>
        <taxon>Enterobacteriaceae</taxon>
        <taxon>Escherichia</taxon>
    </lineage>
</organism>
<dbReference type="EMBL" id="CU928161">
    <property type="protein sequence ID" value="CAR03462.1"/>
    <property type="molecule type" value="Genomic_DNA"/>
</dbReference>
<dbReference type="RefSeq" id="WP_000130864.1">
    <property type="nucleotide sequence ID" value="NC_011742.1"/>
</dbReference>
<dbReference type="SMR" id="B7ME89"/>
<dbReference type="KEGG" id="ecz:ECS88_2176"/>
<dbReference type="HOGENOM" id="CLU_000960_28_0_6"/>
<dbReference type="Proteomes" id="UP000000747">
    <property type="component" value="Chromosome"/>
</dbReference>
<dbReference type="GO" id="GO:0005886">
    <property type="term" value="C:plasma membrane"/>
    <property type="evidence" value="ECO:0007669"/>
    <property type="project" value="UniProtKB-SubCell"/>
</dbReference>
<dbReference type="GO" id="GO:0022857">
    <property type="term" value="F:transmembrane transporter activity"/>
    <property type="evidence" value="ECO:0007669"/>
    <property type="project" value="UniProtKB-UniRule"/>
</dbReference>
<dbReference type="CDD" id="cd17503">
    <property type="entry name" value="MFS_LmrB_MDR_like"/>
    <property type="match status" value="1"/>
</dbReference>
<dbReference type="FunFam" id="1.20.1250.20:FF:000021">
    <property type="entry name" value="Putative multidrug resistance protein MdtD"/>
    <property type="match status" value="1"/>
</dbReference>
<dbReference type="FunFam" id="1.20.1720.10:FF:000001">
    <property type="entry name" value="Putative multidrug resistance protein MdtD"/>
    <property type="match status" value="1"/>
</dbReference>
<dbReference type="Gene3D" id="1.20.1250.20">
    <property type="entry name" value="MFS general substrate transporter like domains"/>
    <property type="match status" value="1"/>
</dbReference>
<dbReference type="Gene3D" id="1.20.1720.10">
    <property type="entry name" value="Multidrug resistance protein D"/>
    <property type="match status" value="1"/>
</dbReference>
<dbReference type="HAMAP" id="MF_01577">
    <property type="entry name" value="MFS_MdtD"/>
    <property type="match status" value="1"/>
</dbReference>
<dbReference type="InterPro" id="IPR004638">
    <property type="entry name" value="EmrB-like"/>
</dbReference>
<dbReference type="InterPro" id="IPR011701">
    <property type="entry name" value="MFS"/>
</dbReference>
<dbReference type="InterPro" id="IPR020846">
    <property type="entry name" value="MFS_dom"/>
</dbReference>
<dbReference type="InterPro" id="IPR036259">
    <property type="entry name" value="MFS_trans_sf"/>
</dbReference>
<dbReference type="InterPro" id="IPR023721">
    <property type="entry name" value="Multi-R_MdtD"/>
</dbReference>
<dbReference type="NCBIfam" id="TIGR00711">
    <property type="entry name" value="efflux_EmrB"/>
    <property type="match status" value="1"/>
</dbReference>
<dbReference type="NCBIfam" id="NF007799">
    <property type="entry name" value="PRK10504.1"/>
    <property type="match status" value="1"/>
</dbReference>
<dbReference type="PANTHER" id="PTHR42718:SF46">
    <property type="entry name" value="BLR6921 PROTEIN"/>
    <property type="match status" value="1"/>
</dbReference>
<dbReference type="PANTHER" id="PTHR42718">
    <property type="entry name" value="MAJOR FACILITATOR SUPERFAMILY MULTIDRUG TRANSPORTER MFSC"/>
    <property type="match status" value="1"/>
</dbReference>
<dbReference type="Pfam" id="PF07690">
    <property type="entry name" value="MFS_1"/>
    <property type="match status" value="1"/>
</dbReference>
<dbReference type="PRINTS" id="PR01036">
    <property type="entry name" value="TCRTETB"/>
</dbReference>
<dbReference type="SUPFAM" id="SSF103473">
    <property type="entry name" value="MFS general substrate transporter"/>
    <property type="match status" value="1"/>
</dbReference>
<dbReference type="PROSITE" id="PS50850">
    <property type="entry name" value="MFS"/>
    <property type="match status" value="1"/>
</dbReference>
<keyword id="KW-0997">Cell inner membrane</keyword>
<keyword id="KW-1003">Cell membrane</keyword>
<keyword id="KW-0472">Membrane</keyword>
<keyword id="KW-1185">Reference proteome</keyword>
<keyword id="KW-0812">Transmembrane</keyword>
<keyword id="KW-1133">Transmembrane helix</keyword>
<keyword id="KW-0813">Transport</keyword>
<name>MDTD_ECO45</name>
<accession>B7ME89</accession>
<comment type="subcellular location">
    <subcellularLocation>
        <location evidence="1">Cell inner membrane</location>
        <topology evidence="1">Multi-pass membrane protein</topology>
    </subcellularLocation>
</comment>
<comment type="similarity">
    <text evidence="1">Belongs to the major facilitator superfamily. TCR/Tet family.</text>
</comment>
<gene>
    <name evidence="1" type="primary">mdtD</name>
    <name type="ordered locus">ECS88_2176</name>
</gene>
<sequence length="471" mass="50888">MTDLPDSTRWQLWIVAFGFFMQSLDTTIVNTALPSMAQSLGESPLHMHMVIVSYVLTVAVMLPASGWLADKVGVRNIFFTAIVLFTLGSLFCALSGTLNELLLARALQGVGGAMMVPVGRLTVMKIVPREQYMAAMTFVTLPGQVGPLLGPALGGLLVEYASWHWIFLINIPVGIIGAIATLMLMPNYTMQTRRFDLSGFLLLAVGMAVLTLALDGSKGTGFSPLAIAGLVAVGVVALVLYLLHAQNNNRALFSLKLFRTRTFSLGLAGSFAGRIGSGMLPFMTPVFLQIGLGFSPFHAGLMMIPMVLGSMGMKRIVVQVVNRFGYRRVLVATTLGLSLVTLLFMTTALLGWYYVLPFVLFLQGMVNSTRFSSMNTLTLKDLPDNLASSGNSLLSMIMQLSMSIGVTIAGLLLGLFGSQHVSVDSGTTQTVFMYTWLSMAFIIALPAFVFARVPSDTHQNVAISRRKRSAQ</sequence>
<reference key="1">
    <citation type="journal article" date="2009" name="PLoS Genet.">
        <title>Organised genome dynamics in the Escherichia coli species results in highly diverse adaptive paths.</title>
        <authorList>
            <person name="Touchon M."/>
            <person name="Hoede C."/>
            <person name="Tenaillon O."/>
            <person name="Barbe V."/>
            <person name="Baeriswyl S."/>
            <person name="Bidet P."/>
            <person name="Bingen E."/>
            <person name="Bonacorsi S."/>
            <person name="Bouchier C."/>
            <person name="Bouvet O."/>
            <person name="Calteau A."/>
            <person name="Chiapello H."/>
            <person name="Clermont O."/>
            <person name="Cruveiller S."/>
            <person name="Danchin A."/>
            <person name="Diard M."/>
            <person name="Dossat C."/>
            <person name="Karoui M.E."/>
            <person name="Frapy E."/>
            <person name="Garry L."/>
            <person name="Ghigo J.M."/>
            <person name="Gilles A.M."/>
            <person name="Johnson J."/>
            <person name="Le Bouguenec C."/>
            <person name="Lescat M."/>
            <person name="Mangenot S."/>
            <person name="Martinez-Jehanne V."/>
            <person name="Matic I."/>
            <person name="Nassif X."/>
            <person name="Oztas S."/>
            <person name="Petit M.A."/>
            <person name="Pichon C."/>
            <person name="Rouy Z."/>
            <person name="Ruf C.S."/>
            <person name="Schneider D."/>
            <person name="Tourret J."/>
            <person name="Vacherie B."/>
            <person name="Vallenet D."/>
            <person name="Medigue C."/>
            <person name="Rocha E.P.C."/>
            <person name="Denamur E."/>
        </authorList>
    </citation>
    <scope>NUCLEOTIDE SEQUENCE [LARGE SCALE GENOMIC DNA]</scope>
    <source>
        <strain>S88 / ExPEC</strain>
    </source>
</reference>